<reference evidence="3" key="1">
    <citation type="journal article" date="1996" name="Microbiology">
        <title>4-dihydromethyltrisporate dehydrogenase from Mucor mucedo, an enzyme of the sexual hormone pathway: purification, and cloning of the corresponding gene.</title>
        <authorList>
            <person name="Czempinski K."/>
            <person name="Kruft V."/>
            <person name="Woestemeyer J."/>
            <person name="Burmester A."/>
        </authorList>
    </citation>
    <scope>NUCLEOTIDE SEQUENCE [GENOMIC DNA]</scope>
    <scope>PROTEIN SEQUENCE OF 40-52; 72-88; 233-244 AND 255-272</scope>
    <source>
        <strain>ATCC 38694 / DSM 810 / CBS 109.16 / NBRC 5776 / NRRL 3634</strain>
        <tissue>Mycelium</tissue>
    </source>
</reference>
<reference key="2">
    <citation type="submission" date="2004-09" db="EMBL/GenBank/DDBJ databases">
        <title>4-dihydromethyltrisporate dehydrogenase, an enzyme of the sex hormone pathway is posttranscriptionally regulated in Mucor mucedo.</title>
        <authorList>
            <person name="Petzold A."/>
            <person name="Burmester A."/>
            <person name="Wolschendorf F."/>
            <person name="Schultze K."/>
            <person name="Woestemeyer J."/>
            <person name="Schimek C."/>
        </authorList>
    </citation>
    <scope>NUCLEOTIDE SEQUENCE [GENOMIC DNA]</scope>
    <source>
        <strain>ATCC 38693 / DSM 809 / CBS 144.24 / NRRL 3635 / VKM F-1356</strain>
    </source>
</reference>
<reference evidence="3" key="3">
    <citation type="journal article" date="1976" name="Arch. Microbiol.">
        <title>Localization and partial characterization of a sex-specific enzyme in homothallic and heterothallic mucorales.</title>
        <authorList>
            <person name="Werkman B.A."/>
        </authorList>
    </citation>
    <scope>FUNCTION</scope>
</reference>
<feature type="chain" id="PRO_0000124677" description="4-dihydromethyl-trisporate dehydrogenase">
    <location>
        <begin position="1"/>
        <end position="321"/>
    </location>
</feature>
<feature type="active site" description="Proton donor" evidence="1">
    <location>
        <position position="51"/>
    </location>
</feature>
<feature type="binding site" evidence="1">
    <location>
        <position position="113"/>
    </location>
    <ligand>
        <name>substrate</name>
    </ligand>
</feature>
<feature type="site" description="Lowers pKa of active site Tyr" evidence="1">
    <location>
        <position position="80"/>
    </location>
</feature>
<feature type="sequence conflict" description="In Ref. 1; AA sequence." evidence="3" ref="1">
    <original>T</original>
    <variation>M</variation>
    <location>
        <position position="40"/>
    </location>
</feature>
<feature type="sequence conflict" description="In Ref. 1; AA sequence." evidence="3" ref="1">
    <original>C</original>
    <variation>E</variation>
    <location>
        <position position="49"/>
    </location>
</feature>
<feature type="sequence conflict" description="In Ref. 1; AA sequence." evidence="3" ref="1">
    <original>G</original>
    <variation>N</variation>
    <location>
        <position position="255"/>
    </location>
</feature>
<feature type="sequence conflict" description="In Ref. 1; AA sequence." evidence="3" ref="1">
    <original>P</original>
    <variation>I</variation>
    <location>
        <position position="271"/>
    </location>
</feature>
<comment type="function">
    <text evidence="2">Catalyzes the NADP-dependent oxidation of (+) mating-type specific precursor 4-dihydromethyl-trisporate to methyl-trisporate.</text>
</comment>
<comment type="pathway">
    <text>Pheromone biosynthesis; trisporate biosynthesis.</text>
</comment>
<comment type="similarity">
    <text evidence="3">Belongs to the aldo/keto reductase family.</text>
</comment>
<accession>Q01213</accession>
<accession>Q659V0</accession>
<protein>
    <recommendedName>
        <fullName>4-dihydromethyl-trisporate dehydrogenase</fullName>
        <shortName>4-dihydromethyl-TA dehydrogenase</shortName>
        <ecNumber>1.1.1.-</ecNumber>
    </recommendedName>
</protein>
<name>DTDH_MUCMU</name>
<sequence length="321" mass="36484">MSTDYLTLNRTGDKMPIRGFGCWKIDTKDCEETVYQAIKTGYRLFDGACDYGNEVEVGRGINKAINEGLVKREDLFIVTKLWNTFHSKKHVRALFDRQLKDTGLEYFDLYLIHFPVPLQYVDPATVYPPGWYVGDAKSLQFEQSPIHECWAELEKIVDAGLARNIGVANFNCQAILDLLTYARIKPAVLQIELHPYLPQERLVKWVKEQGIQITAYSSFGPTSYVDLTESGKTYTSLLEHASVKSVADKHNVSTGQVLLRWALDREFAVIPKSVNAGRMKANLEILDIKLDAEDNKTLDSLKTNQRFNDPMTYGFGLPLFD</sequence>
<keyword id="KW-0903">Direct protein sequencing</keyword>
<keyword id="KW-0521">NADP</keyword>
<keyword id="KW-0560">Oxidoreductase</keyword>
<organism evidence="4">
    <name type="scientific">Mucor mucedo</name>
    <name type="common">Common pinmould</name>
    <dbReference type="NCBI Taxonomy" id="29922"/>
    <lineage>
        <taxon>Eukaryota</taxon>
        <taxon>Fungi</taxon>
        <taxon>Fungi incertae sedis</taxon>
        <taxon>Mucoromycota</taxon>
        <taxon>Mucoromycotina</taxon>
        <taxon>Mucoromycetes</taxon>
        <taxon>Mucorales</taxon>
        <taxon>Mucorineae</taxon>
        <taxon>Mucoraceae</taxon>
        <taxon>Mucor</taxon>
    </lineage>
</organism>
<evidence type="ECO:0000250" key="1"/>
<evidence type="ECO:0000269" key="2">
    <source ref="3"/>
</evidence>
<evidence type="ECO:0000305" key="3"/>
<evidence type="ECO:0000312" key="4">
    <source>
        <dbReference type="EMBL" id="CAA98021.1"/>
    </source>
</evidence>
<gene>
    <name type="primary">tdh</name>
</gene>
<dbReference type="EC" id="1.1.1.-"/>
<dbReference type="EMBL" id="Z73640">
    <property type="protein sequence ID" value="CAA98021.1"/>
    <property type="molecule type" value="Genomic_DNA"/>
</dbReference>
<dbReference type="EMBL" id="AJ831376">
    <property type="protein sequence ID" value="CAH40839.1"/>
    <property type="molecule type" value="Genomic_DNA"/>
</dbReference>
<dbReference type="SMR" id="Q01213"/>
<dbReference type="UniPathway" id="UPA00170"/>
<dbReference type="GO" id="GO:0016696">
    <property type="term" value="F:oxidoreductase activity, acting on hydrogen as donor, NAD or NADP as acceptor"/>
    <property type="evidence" value="ECO:0000303"/>
    <property type="project" value="UniProtKB"/>
</dbReference>
<dbReference type="GO" id="GO:0046842">
    <property type="term" value="P:trisporic acid biosynthetic process"/>
    <property type="evidence" value="ECO:0000303"/>
    <property type="project" value="UniProtKB"/>
</dbReference>
<dbReference type="CDD" id="cd19114">
    <property type="entry name" value="AKR_AKR2C1"/>
    <property type="match status" value="1"/>
</dbReference>
<dbReference type="FunFam" id="3.20.20.100:FF:000007">
    <property type="entry name" value="NAD(P)H-dependent D-xylose reductase xyl1"/>
    <property type="match status" value="1"/>
</dbReference>
<dbReference type="Gene3D" id="3.20.20.100">
    <property type="entry name" value="NADP-dependent oxidoreductase domain"/>
    <property type="match status" value="1"/>
</dbReference>
<dbReference type="InterPro" id="IPR020471">
    <property type="entry name" value="AKR"/>
</dbReference>
<dbReference type="InterPro" id="IPR018170">
    <property type="entry name" value="Aldo/ket_reductase_CS"/>
</dbReference>
<dbReference type="InterPro" id="IPR023210">
    <property type="entry name" value="NADP_OxRdtase_dom"/>
</dbReference>
<dbReference type="InterPro" id="IPR036812">
    <property type="entry name" value="NADP_OxRdtase_dom_sf"/>
</dbReference>
<dbReference type="PANTHER" id="PTHR11732">
    <property type="entry name" value="ALDO/KETO REDUCTASE"/>
    <property type="match status" value="1"/>
</dbReference>
<dbReference type="Pfam" id="PF00248">
    <property type="entry name" value="Aldo_ket_red"/>
    <property type="match status" value="1"/>
</dbReference>
<dbReference type="PIRSF" id="PIRSF000097">
    <property type="entry name" value="AKR"/>
    <property type="match status" value="1"/>
</dbReference>
<dbReference type="PRINTS" id="PR00069">
    <property type="entry name" value="ALDKETRDTASE"/>
</dbReference>
<dbReference type="SUPFAM" id="SSF51430">
    <property type="entry name" value="NAD(P)-linked oxidoreductase"/>
    <property type="match status" value="1"/>
</dbReference>
<dbReference type="PROSITE" id="PS00798">
    <property type="entry name" value="ALDOKETO_REDUCTASE_1"/>
    <property type="match status" value="1"/>
</dbReference>
<dbReference type="PROSITE" id="PS00063">
    <property type="entry name" value="ALDOKETO_REDUCTASE_3"/>
    <property type="match status" value="1"/>
</dbReference>
<proteinExistence type="evidence at protein level"/>